<organism>
    <name type="scientific">Jasminum nudiflorum</name>
    <name type="common">Winter jasmine</name>
    <dbReference type="NCBI Taxonomy" id="126431"/>
    <lineage>
        <taxon>Eukaryota</taxon>
        <taxon>Viridiplantae</taxon>
        <taxon>Streptophyta</taxon>
        <taxon>Embryophyta</taxon>
        <taxon>Tracheophyta</taxon>
        <taxon>Spermatophyta</taxon>
        <taxon>Magnoliopsida</taxon>
        <taxon>eudicotyledons</taxon>
        <taxon>Gunneridae</taxon>
        <taxon>Pentapetalae</taxon>
        <taxon>asterids</taxon>
        <taxon>lamiids</taxon>
        <taxon>Lamiales</taxon>
        <taxon>Oleaceae</taxon>
        <taxon>Jasmineae</taxon>
        <taxon>Jasminum</taxon>
    </lineage>
</organism>
<protein>
    <recommendedName>
        <fullName evidence="1">Large ribosomal subunit protein bL32c</fullName>
    </recommendedName>
    <alternativeName>
        <fullName evidence="2">50S ribosomal protein L32, chloroplastic</fullName>
    </alternativeName>
</protein>
<feature type="chain" id="PRO_0000276473" description="Large ribosomal subunit protein bL32c">
    <location>
        <begin position="1"/>
        <end position="73"/>
    </location>
</feature>
<name>RK32_JASNU</name>
<comment type="subcellular location">
    <subcellularLocation>
        <location>Plastid</location>
        <location>Chloroplast</location>
    </subcellularLocation>
</comment>
<comment type="similarity">
    <text evidence="1">Belongs to the bacterial ribosomal protein bL32 family.</text>
</comment>
<sequence>MAVPKKRTSASKKRIRKNSWKGKGYGTALKAFSLGKSLSTGNSKSFFVPKNSLKVFKRIIKNWNNLNRLGSKN</sequence>
<proteinExistence type="inferred from homology"/>
<geneLocation type="chloroplast"/>
<accession>Q06R82</accession>
<dbReference type="EMBL" id="DQ673255">
    <property type="protein sequence ID" value="ABG74677.1"/>
    <property type="molecule type" value="Genomic_DNA"/>
</dbReference>
<dbReference type="RefSeq" id="YP_778539.1">
    <property type="nucleotide sequence ID" value="NC_008407.1"/>
</dbReference>
<dbReference type="SMR" id="Q06R82"/>
<dbReference type="GeneID" id="4319829"/>
<dbReference type="GO" id="GO:0009507">
    <property type="term" value="C:chloroplast"/>
    <property type="evidence" value="ECO:0007669"/>
    <property type="project" value="UniProtKB-SubCell"/>
</dbReference>
<dbReference type="GO" id="GO:0015934">
    <property type="term" value="C:large ribosomal subunit"/>
    <property type="evidence" value="ECO:0007669"/>
    <property type="project" value="InterPro"/>
</dbReference>
<dbReference type="GO" id="GO:0003735">
    <property type="term" value="F:structural constituent of ribosome"/>
    <property type="evidence" value="ECO:0007669"/>
    <property type="project" value="InterPro"/>
</dbReference>
<dbReference type="GO" id="GO:0006412">
    <property type="term" value="P:translation"/>
    <property type="evidence" value="ECO:0007669"/>
    <property type="project" value="UniProtKB-UniRule"/>
</dbReference>
<dbReference type="HAMAP" id="MF_00340">
    <property type="entry name" value="Ribosomal_bL32"/>
    <property type="match status" value="1"/>
</dbReference>
<dbReference type="InterPro" id="IPR002677">
    <property type="entry name" value="Ribosomal_bL32"/>
</dbReference>
<dbReference type="InterPro" id="IPR044958">
    <property type="entry name" value="Ribosomal_bL32_plant/cyanobact"/>
</dbReference>
<dbReference type="InterPro" id="IPR011332">
    <property type="entry name" value="Ribosomal_zn-bd"/>
</dbReference>
<dbReference type="PANTHER" id="PTHR36083">
    <property type="entry name" value="50S RIBOSOMAL PROTEIN L32, CHLOROPLASTIC"/>
    <property type="match status" value="1"/>
</dbReference>
<dbReference type="PANTHER" id="PTHR36083:SF1">
    <property type="entry name" value="LARGE RIBOSOMAL SUBUNIT PROTEIN BL32C"/>
    <property type="match status" value="1"/>
</dbReference>
<dbReference type="Pfam" id="PF01783">
    <property type="entry name" value="Ribosomal_L32p"/>
    <property type="match status" value="1"/>
</dbReference>
<dbReference type="SUPFAM" id="SSF57829">
    <property type="entry name" value="Zn-binding ribosomal proteins"/>
    <property type="match status" value="1"/>
</dbReference>
<keyword id="KW-0150">Chloroplast</keyword>
<keyword id="KW-0934">Plastid</keyword>
<keyword id="KW-0687">Ribonucleoprotein</keyword>
<keyword id="KW-0689">Ribosomal protein</keyword>
<evidence type="ECO:0000255" key="1">
    <source>
        <dbReference type="HAMAP-Rule" id="MF_00340"/>
    </source>
</evidence>
<evidence type="ECO:0000305" key="2"/>
<gene>
    <name evidence="1" type="primary">rpl32</name>
    <name type="ORF">JNC1250</name>
</gene>
<reference key="1">
    <citation type="journal article" date="2007" name="Mol. Biol. Evol.">
        <title>Gene relocations within chloroplast genomes of Jasminum and Menodora (Oleaceae) are due to multiple, overlapping inversions.</title>
        <authorList>
            <person name="Lee H.-L."/>
            <person name="Jansen R.K."/>
            <person name="Chumley T.W."/>
            <person name="Kim K.-J."/>
        </authorList>
    </citation>
    <scope>NUCLEOTIDE SEQUENCE [LARGE SCALE GENOMIC DNA]</scope>
</reference>